<dbReference type="EMBL" id="U10305">
    <property type="protein sequence ID" value="AAA19053.1"/>
    <property type="molecule type" value="mRNA"/>
</dbReference>
<dbReference type="EMBL" id="U09739">
    <property type="protein sequence ID" value="AAA86873.1"/>
    <property type="molecule type" value="mRNA"/>
</dbReference>
<dbReference type="EMBL" id="U49865">
    <property type="protein sequence ID" value="AAA92951.1"/>
    <property type="molecule type" value="mRNA"/>
</dbReference>
<dbReference type="EMBL" id="U49866">
    <property type="protein sequence ID" value="AAA92952.1"/>
    <property type="molecule type" value="mRNA"/>
</dbReference>
<dbReference type="EMBL" id="U49867">
    <property type="protein sequence ID" value="AAA92953.1"/>
    <property type="molecule type" value="mRNA"/>
</dbReference>
<dbReference type="EMBL" id="U49868">
    <property type="protein sequence ID" value="AAA92954.1"/>
    <property type="molecule type" value="mRNA"/>
</dbReference>
<dbReference type="EMBL" id="U56404">
    <property type="protein sequence ID" value="AAB19100.1"/>
    <property type="molecule type" value="mRNA"/>
</dbReference>
<dbReference type="EMBL" id="U56405">
    <property type="protein sequence ID" value="AAB19101.1"/>
    <property type="molecule type" value="mRNA"/>
</dbReference>
<dbReference type="EMBL" id="AK159595">
    <property type="protein sequence ID" value="BAE35215.1"/>
    <property type="molecule type" value="mRNA"/>
</dbReference>
<dbReference type="EMBL" id="AC087336">
    <property type="status" value="NOT_ANNOTATED_CDS"/>
    <property type="molecule type" value="Genomic_DNA"/>
</dbReference>
<dbReference type="EMBL" id="BC099867">
    <property type="protein sequence ID" value="AAH99867.1"/>
    <property type="molecule type" value="mRNA"/>
</dbReference>
<dbReference type="EMBL" id="BC099878">
    <property type="protein sequence ID" value="AAH99878.1"/>
    <property type="molecule type" value="mRNA"/>
</dbReference>
<dbReference type="EMBL" id="BC099879">
    <property type="protein sequence ID" value="AAH99879.1"/>
    <property type="molecule type" value="mRNA"/>
</dbReference>
<dbReference type="EMBL" id="BC099880">
    <property type="protein sequence ID" value="AAH99880.1"/>
    <property type="molecule type" value="mRNA"/>
</dbReference>
<dbReference type="EMBL" id="BC101952">
    <property type="protein sequence ID" value="AAI01953.1"/>
    <property type="molecule type" value="mRNA"/>
</dbReference>
<dbReference type="EMBL" id="BC103543">
    <property type="protein sequence ID" value="AAI03544.1"/>
    <property type="molecule type" value="mRNA"/>
</dbReference>
<dbReference type="EMBL" id="BC103544">
    <property type="protein sequence ID" value="AAI03545.1"/>
    <property type="molecule type" value="mRNA"/>
</dbReference>
<dbReference type="EMBL" id="BC103545">
    <property type="protein sequence ID" value="AAI03546.1"/>
    <property type="molecule type" value="mRNA"/>
</dbReference>
<dbReference type="EMBL" id="BC132524">
    <property type="protein sequence ID" value="AAI32525.1"/>
    <property type="molecule type" value="mRNA"/>
</dbReference>
<dbReference type="EMBL" id="BC132526">
    <property type="protein sequence ID" value="AAI32527.1"/>
    <property type="molecule type" value="mRNA"/>
</dbReference>
<dbReference type="EMBL" id="BC145192">
    <property type="protein sequence ID" value="AAI45193.1"/>
    <property type="molecule type" value="mRNA"/>
</dbReference>
<dbReference type="EMBL" id="BC145193">
    <property type="protein sequence ID" value="AAI45194.1"/>
    <property type="molecule type" value="mRNA"/>
</dbReference>
<dbReference type="CCDS" id="CCDS20601.1"/>
<dbReference type="PIR" id="I49059">
    <property type="entry name" value="I49059"/>
</dbReference>
<dbReference type="PIR" id="I49363">
    <property type="entry name" value="I49363"/>
</dbReference>
<dbReference type="RefSeq" id="NP_001276533.1">
    <property type="nucleotide sequence ID" value="NM_001289604.1"/>
</dbReference>
<dbReference type="RefSeq" id="NP_001276534.1">
    <property type="nucleotide sequence ID" value="NM_001289605.1"/>
</dbReference>
<dbReference type="RefSeq" id="NP_034778.2">
    <property type="nucleotide sequence ID" value="NM_010648.3"/>
</dbReference>
<dbReference type="PDB" id="1P1Z">
    <property type="method" value="X-ray"/>
    <property type="resolution" value="3.26 A"/>
    <property type="chains" value="D=143-262"/>
</dbReference>
<dbReference type="PDB" id="1P4L">
    <property type="method" value="X-ray"/>
    <property type="resolution" value="2.90 A"/>
    <property type="chains" value="D=142-263"/>
</dbReference>
<dbReference type="PDB" id="3C8J">
    <property type="method" value="X-ray"/>
    <property type="resolution" value="2.60 A"/>
    <property type="chains" value="A/B/C/D=67-266"/>
</dbReference>
<dbReference type="PDB" id="3C8K">
    <property type="method" value="X-ray"/>
    <property type="resolution" value="2.90 A"/>
    <property type="chains" value="D=142-266"/>
</dbReference>
<dbReference type="PDB" id="5J6G">
    <property type="method" value="X-ray"/>
    <property type="resolution" value="3.30 A"/>
    <property type="chains" value="G/H=136-266"/>
</dbReference>
<dbReference type="PDBsum" id="1P1Z"/>
<dbReference type="PDBsum" id="1P4L"/>
<dbReference type="PDBsum" id="3C8J"/>
<dbReference type="PDBsum" id="3C8K"/>
<dbReference type="PDBsum" id="5J6G"/>
<dbReference type="SMR" id="Q64329"/>
<dbReference type="BioGRID" id="200995">
    <property type="interactions" value="1"/>
</dbReference>
<dbReference type="FunCoup" id="Q64329">
    <property type="interactions" value="591"/>
</dbReference>
<dbReference type="STRING" id="10090.ENSMUSP00000107629"/>
<dbReference type="GlyCosmos" id="Q64329">
    <property type="glycosylation" value="5 sites, No reported glycans"/>
</dbReference>
<dbReference type="GlyGen" id="Q64329">
    <property type="glycosylation" value="5 sites"/>
</dbReference>
<dbReference type="PaxDb" id="10090-ENSMUSP00000107629"/>
<dbReference type="DNASU" id="16640"/>
<dbReference type="Ensembl" id="ENSMUST00000088017.5">
    <property type="protein sequence ID" value="ENSMUSP00000085333.5"/>
    <property type="gene ID" value="ENSMUSG00000067591.13"/>
</dbReference>
<dbReference type="Ensembl" id="ENSMUST00000111998.9">
    <property type="protein sequence ID" value="ENSMUSP00000107629.3"/>
    <property type="gene ID" value="ENSMUSG00000067591.13"/>
</dbReference>
<dbReference type="GeneID" id="16634"/>
<dbReference type="KEGG" id="mmu:16634"/>
<dbReference type="KEGG" id="mmu:16640"/>
<dbReference type="UCSC" id="uc009eik.2">
    <property type="organism name" value="mouse"/>
</dbReference>
<dbReference type="AGR" id="MGI:101905"/>
<dbReference type="CTD" id="16634"/>
<dbReference type="CTD" id="16640"/>
<dbReference type="MGI" id="MGI:101905">
    <property type="gene designation" value="Klra3"/>
</dbReference>
<dbReference type="VEuPathDB" id="HostDB:ENSMUSG00000067591"/>
<dbReference type="eggNOG" id="KOG4297">
    <property type="taxonomic scope" value="Eukaryota"/>
</dbReference>
<dbReference type="GeneTree" id="ENSGT00390000008117"/>
<dbReference type="HOGENOM" id="CLU_049894_1_0_1"/>
<dbReference type="InParanoid" id="Q64329"/>
<dbReference type="OMA" id="WIGCKQA"/>
<dbReference type="OrthoDB" id="2142683at2759"/>
<dbReference type="PhylomeDB" id="Q64329"/>
<dbReference type="TreeFam" id="TF336674"/>
<dbReference type="BioGRID-ORCS" id="16634">
    <property type="hits" value="1 hit in 45 CRISPR screens"/>
</dbReference>
<dbReference type="BioGRID-ORCS" id="16640">
    <property type="hits" value="1 hit in 44 CRISPR screens"/>
</dbReference>
<dbReference type="ChiTaRS" id="Klra3">
    <property type="organism name" value="mouse"/>
</dbReference>
<dbReference type="EvolutionaryTrace" id="Q64329"/>
<dbReference type="PRO" id="PR:Q64329"/>
<dbReference type="Proteomes" id="UP000000589">
    <property type="component" value="Chromosome 6"/>
</dbReference>
<dbReference type="RNAct" id="Q64329">
    <property type="molecule type" value="protein"/>
</dbReference>
<dbReference type="Bgee" id="ENSMUSG00000067591">
    <property type="expression patterns" value="Expressed in spleen and 11 other cell types or tissues"/>
</dbReference>
<dbReference type="GO" id="GO:0005886">
    <property type="term" value="C:plasma membrane"/>
    <property type="evidence" value="ECO:0000304"/>
    <property type="project" value="MGI"/>
</dbReference>
<dbReference type="GO" id="GO:0030246">
    <property type="term" value="F:carbohydrate binding"/>
    <property type="evidence" value="ECO:0007669"/>
    <property type="project" value="UniProtKB-KW"/>
</dbReference>
<dbReference type="GO" id="GO:0007155">
    <property type="term" value="P:cell adhesion"/>
    <property type="evidence" value="ECO:0007669"/>
    <property type="project" value="UniProtKB-KW"/>
</dbReference>
<dbReference type="CDD" id="cd03593">
    <property type="entry name" value="CLECT_NK_receptors_like"/>
    <property type="match status" value="1"/>
</dbReference>
<dbReference type="FunFam" id="3.10.100.10:FF:000053">
    <property type="entry name" value="Killer cell lectin-like receptor 3"/>
    <property type="match status" value="1"/>
</dbReference>
<dbReference type="Gene3D" id="3.10.100.10">
    <property type="entry name" value="Mannose-Binding Protein A, subunit A"/>
    <property type="match status" value="1"/>
</dbReference>
<dbReference type="InterPro" id="IPR001304">
    <property type="entry name" value="C-type_lectin-like"/>
</dbReference>
<dbReference type="InterPro" id="IPR016186">
    <property type="entry name" value="C-type_lectin-like/link_sf"/>
</dbReference>
<dbReference type="InterPro" id="IPR016187">
    <property type="entry name" value="CTDL_fold"/>
</dbReference>
<dbReference type="InterPro" id="IPR013600">
    <property type="entry name" value="Ly49_N"/>
</dbReference>
<dbReference type="InterPro" id="IPR052013">
    <property type="entry name" value="Mouse_KLRs"/>
</dbReference>
<dbReference type="InterPro" id="IPR033992">
    <property type="entry name" value="NKR-like_CTLD"/>
</dbReference>
<dbReference type="PANTHER" id="PTHR46329">
    <property type="entry name" value="KILLER CELL LECTIN-LIKE RECEPTOR 2"/>
    <property type="match status" value="1"/>
</dbReference>
<dbReference type="PANTHER" id="PTHR46329:SF3">
    <property type="entry name" value="KILLER CELL LECTIN-LIKE RECEPTOR 3-RELATED"/>
    <property type="match status" value="1"/>
</dbReference>
<dbReference type="Pfam" id="PF00059">
    <property type="entry name" value="Lectin_C"/>
    <property type="match status" value="1"/>
</dbReference>
<dbReference type="Pfam" id="PF08391">
    <property type="entry name" value="Ly49"/>
    <property type="match status" value="1"/>
</dbReference>
<dbReference type="SMART" id="SM00034">
    <property type="entry name" value="CLECT"/>
    <property type="match status" value="1"/>
</dbReference>
<dbReference type="SUPFAM" id="SSF56436">
    <property type="entry name" value="C-type lectin-like"/>
    <property type="match status" value="1"/>
</dbReference>
<dbReference type="PROSITE" id="PS50041">
    <property type="entry name" value="C_TYPE_LECTIN_2"/>
    <property type="match status" value="1"/>
</dbReference>
<protein>
    <recommendedName>
        <fullName>Killer cell lectin-like receptor 3</fullName>
    </recommendedName>
    <alternativeName>
        <fullName>5E6</fullName>
    </alternativeName>
    <alternativeName>
        <fullName>Lymphocyte antigen 49c</fullName>
        <shortName>Ly-49c</shortName>
    </alternativeName>
    <alternativeName>
        <fullName>Nk2.1</fullName>
    </alternativeName>
    <alternativeName>
        <fullName>T-cell surface glycoprotein Ly-49C</fullName>
    </alternativeName>
</protein>
<name>KLRA3_MOUSE</name>
<feature type="chain" id="PRO_0000046681" description="Killer cell lectin-like receptor 3">
    <location>
        <begin position="1"/>
        <end position="266"/>
    </location>
</feature>
<feature type="topological domain" description="Cytoplasmic" evidence="1">
    <location>
        <begin position="1"/>
        <end position="48"/>
    </location>
</feature>
<feature type="transmembrane region" description="Helical; Signal-anchor for type II membrane protein" evidence="1">
    <location>
        <begin position="49"/>
        <end position="69"/>
    </location>
</feature>
<feature type="topological domain" description="Extracellular" evidence="1">
    <location>
        <begin position="70"/>
        <end position="266"/>
    </location>
</feature>
<feature type="domain" description="C-type lectin" evidence="2">
    <location>
        <begin position="150"/>
        <end position="258"/>
    </location>
</feature>
<feature type="region of interest" description="Involved in dimerization">
    <location>
        <begin position="147"/>
        <end position="151"/>
    </location>
</feature>
<feature type="region of interest" description="Implicated in MHC class I binding">
    <location>
        <begin position="160"/>
        <end position="162"/>
    </location>
</feature>
<feature type="region of interest" description="Implicated in MHC class I binding">
    <location>
        <begin position="195"/>
        <end position="196"/>
    </location>
</feature>
<feature type="region of interest" description="Implicated in MHC class I binding">
    <location>
        <begin position="207"/>
        <end position="208"/>
    </location>
</feature>
<feature type="region of interest" description="Implicated in MHC class I binding">
    <location>
        <begin position="224"/>
        <end position="233"/>
    </location>
</feature>
<feature type="region of interest" description="Implicated in MHC class I binding">
    <location>
        <begin position="240"/>
        <end position="245"/>
    </location>
</feature>
<feature type="glycosylation site" description="N-linked (GlcNAc...) asparagine" evidence="1">
    <location>
        <position position="79"/>
    </location>
</feature>
<feature type="glycosylation site" description="N-linked (GlcNAc...) asparagine" evidence="1">
    <location>
        <position position="87"/>
    </location>
</feature>
<feature type="glycosylation site" description="N-linked (GlcNAc...) asparagine" evidence="1">
    <location>
        <position position="104"/>
    </location>
</feature>
<feature type="glycosylation site" description="N-linked (GlcNAc...) asparagine" evidence="1">
    <location>
        <position position="113"/>
    </location>
</feature>
<feature type="glycosylation site" description="N-linked (GlcNAc...) asparagine" evidence="1">
    <location>
        <position position="160"/>
    </location>
</feature>
<feature type="disulfide bond">
    <location>
        <begin position="149"/>
        <end position="154"/>
    </location>
</feature>
<feature type="disulfide bond">
    <location>
        <begin position="167"/>
        <end position="255"/>
    </location>
</feature>
<feature type="disulfide bond">
    <location>
        <begin position="171"/>
        <end position="257"/>
    </location>
</feature>
<feature type="disulfide bond">
    <location>
        <begin position="236"/>
        <end position="249"/>
    </location>
</feature>
<feature type="sequence variant" description="In strain: C57BL/6 and C57BL/6 X BALB/c.">
    <original>S</original>
    <variation>N</variation>
    <location>
        <position position="2"/>
    </location>
</feature>
<feature type="sequence variant" description="In strain: A/Sn, BALB/c, C57BL/6, C57BL/6 X BALB/c, C57BL/6 X CBA, CB-17/SCID and NZB.">
    <original>L</original>
    <variation>Q</variation>
    <location>
        <position position="22"/>
    </location>
</feature>
<feature type="sequence variant" description="In strain: C57BL/6, C57BL/6 X BALB/c and NZB.">
    <original>V</original>
    <variation>A</variation>
    <location>
        <position position="34"/>
    </location>
</feature>
<feature type="sequence variant" description="In strain: C57BL/6 X BALB/c, NZB and C57BL/6.">
    <original>AP</original>
    <variation>VS</variation>
    <location>
        <begin position="41"/>
        <end position="42"/>
    </location>
</feature>
<feature type="sequence variant" description="In strain: C57BL/6, C57BL/6 X BALB/c and NZB.">
    <original>T</original>
    <variation>I</variation>
    <location>
        <position position="60"/>
    </location>
</feature>
<feature type="sequence variant" description="In strain: C57BL/6, C57BL/6 X BALB/c and NZB.">
    <original>AV</original>
    <variation>TI</variation>
    <location>
        <begin position="65"/>
        <end position="66"/>
    </location>
</feature>
<feature type="sequence variant" description="In strain: C57BL/6, C57BL/6 X BALB/c and NZB.">
    <original>N</original>
    <variation>S</variation>
    <location>
        <position position="72"/>
    </location>
</feature>
<feature type="sequence variant" description="In strain: C57BL/6, C57BL/6 X BALB/c and NZB.">
    <original>H</original>
    <variation>Y</variation>
    <location>
        <position position="85"/>
    </location>
</feature>
<feature type="sequence variant" description="In strain: A/Sn, BALB/c, C57BL/6, C57BL/6 X BALB/c, C57BL/6 X CBA, CB-17/SCID and NZB.">
    <original>RA</original>
    <variation>SD</variation>
    <location>
        <begin position="93"/>
        <end position="94"/>
    </location>
</feature>
<feature type="sequence variant" description="In strain: C57BL/6, C57BL/6 X BALB/c and NZB; requires 2 nucleotide substitutions.">
    <original>T</original>
    <variation>L</variation>
    <location>
        <position position="115"/>
    </location>
</feature>
<feature type="sequence variant" description="In strain: C57BL/6 and C57BL/6 X BALB/c.">
    <original>E</original>
    <variation>D</variation>
    <location>
        <position position="117"/>
    </location>
</feature>
<feature type="sequence variant" description="In strain: C57BL/6 and C57BL/6 X BALB/c.">
    <original>D</original>
    <variation>N</variation>
    <location>
        <position position="127"/>
    </location>
</feature>
<feature type="sequence variant" description="In strain: C57BL/6, C57BL/6 X BALB/c and NZB.">
    <original>K</original>
    <variation>E</variation>
    <location>
        <position position="129"/>
    </location>
</feature>
<feature type="sequence variant" description="In strain: NZB.">
    <original>K</original>
    <variation>N</variation>
    <location>
        <position position="131"/>
    </location>
</feature>
<feature type="sequence variant" description="In strain: NZB.">
    <original>V</original>
    <variation>I</variation>
    <location>
        <position position="133"/>
    </location>
</feature>
<feature type="sequence variant" description="In strain: C57BL/6 and C57BL/6 X BALB/c.">
    <original>Y</original>
    <variation>H</variation>
    <location>
        <position position="146"/>
    </location>
</feature>
<feature type="sequence variant" description="In strain: C57BL/6, C57BL/6 X BALB/c and NZB.">
    <original>S</original>
    <variation>G</variation>
    <location>
        <position position="151"/>
    </location>
</feature>
<feature type="sequence variant" description="In strain: A/Sn, BALB/c, C57BL/6, C57BL/6 X BALB/c, C57BL/6 X CBA, CB-17/SCID and NZB.">
    <original>Y</original>
    <variation>F</variation>
    <location>
        <position position="174"/>
    </location>
</feature>
<feature type="sequence variant" description="In strain: C57BL/6, C57BL/6 X BALB/c and NZB.">
    <original>L</original>
    <variation>V</variation>
    <location>
        <position position="179"/>
    </location>
</feature>
<feature type="sequence variant" description="In strain: NZB.">
    <original>F</original>
    <variation>S</variation>
    <location>
        <position position="189"/>
    </location>
</feature>
<feature type="sequence variant" description="In strain: C57BL/6, C57BL/6 X BALB/c and NZB.">
    <original>N</original>
    <variation>S</variation>
    <location>
        <position position="198"/>
    </location>
</feature>
<feature type="sequence variant" description="In strain: C57BL/6, C57BL/6 X BALB/c and NZB.">
    <original>P</original>
    <variation>Q</variation>
    <location>
        <position position="219"/>
    </location>
</feature>
<feature type="sequence variant" description="In strain: C57BL/6, C57BL/6 X BALB/c and NZB.">
    <original>I</original>
    <variation>T</variation>
    <location>
        <position position="226"/>
    </location>
</feature>
<feature type="sequence variant" description="In strain: NZB.">
    <original>K</original>
    <variation>T</variation>
    <location>
        <position position="232"/>
    </location>
</feature>
<feature type="sequence variant" description="In strain: C57BL/6, C57BL/6 X BALB/c and NZB.">
    <original>I</original>
    <variation>T</variation>
    <location>
        <position position="247"/>
    </location>
</feature>
<feature type="sequence variant" description="In strain: NZB.">
    <original>I</original>
    <variation>T</variation>
    <location>
        <position position="251"/>
    </location>
</feature>
<feature type="sequence variant" description="In strain: NZB.">
    <original>K</original>
    <variation>R</variation>
    <location>
        <position position="260"/>
    </location>
</feature>
<feature type="mutagenesis site" description="Increases stability and improves binding to MHC I class ligand; when associated with G-175; G-197 and K-227." evidence="4">
    <original>R</original>
    <variation>G</variation>
    <location>
        <position position="121"/>
    </location>
</feature>
<feature type="mutagenesis site" description="Greatly reduces MHC class I peptide tetramer binding; when associated with L-162." evidence="3">
    <original>N</original>
    <variation>D</variation>
    <location>
        <position position="160"/>
    </location>
</feature>
<feature type="mutagenesis site" description="No effect on MHC class I peptide tetramer binding." evidence="3">
    <original>K</original>
    <variation>R</variation>
    <location>
        <position position="161"/>
    </location>
</feature>
<feature type="mutagenesis site" description="Greatly reduces MHC class I peptide tetramer binding; when associated with D-160." evidence="3">
    <original>T</original>
    <variation>K</variation>
    <location>
        <position position="162"/>
    </location>
</feature>
<feature type="mutagenesis site" description="No effect on MHC class I peptide tetramer binding; when associated with T-170." evidence="3">
    <original>A</original>
    <variation>Q</variation>
    <location>
        <position position="169"/>
    </location>
</feature>
<feature type="mutagenesis site" description="No effect on MHC class I peptide tetramer binding; when associated with Q-169." evidence="3">
    <original>N</original>
    <variation>T</variation>
    <location>
        <position position="170"/>
    </location>
</feature>
<feature type="mutagenesis site" description="No effect on MHC class I peptide tetramer binding; when associated with S-174." evidence="3">
    <original>H</original>
    <variation>S</variation>
    <location>
        <position position="173"/>
    </location>
</feature>
<feature type="mutagenesis site" description="No effect on MHC class I binding; when associated with S-173." evidence="3">
    <original>Y</original>
    <variation>S</variation>
    <location>
        <position position="174"/>
    </location>
</feature>
<feature type="mutagenesis site" description="Increases stability. Increases stability and improves binding to MHC I class ligand; when associated with G-121; G-197 and K-227." evidence="4">
    <original>S</original>
    <variation>G</variation>
    <location>
        <position position="175"/>
    </location>
</feature>
<feature type="mutagenesis site" description="Greatly reduces MHC class I peptide tetramer binding; when associated with S-196." evidence="3">
    <original>I</original>
    <variation>P</variation>
    <location>
        <position position="195"/>
    </location>
</feature>
<feature type="mutagenesis site" description="Greatly reduces MHC class I peptide tetramer binding; when associated with P-195." evidence="3">
    <original>P</original>
    <variation>S</variation>
    <location>
        <position position="196"/>
    </location>
</feature>
<feature type="mutagenesis site" description="Increases stability and improves binding to MHC I class ligand; when associated with G-121; G-175 and K-227." evidence="4">
    <original>E</original>
    <variation>G</variation>
    <location>
        <position position="197"/>
    </location>
</feature>
<feature type="mutagenesis site" description="Greatly reduces MHC class I peptide tetramer binding; when associated with T-226." evidence="3">
    <original>K</original>
    <variation>N</variation>
    <location>
        <position position="225"/>
    </location>
</feature>
<feature type="mutagenesis site" description="Greatly reduces MHC class I peptide tetramer binding; when associated with N-225." evidence="3">
    <original>I</original>
    <variation>T</variation>
    <location>
        <position position="226"/>
    </location>
</feature>
<feature type="mutagenesis site" description="Increases stability and improves binding to MHC I class ligand; when associated with G-121; G-175 and G-197." evidence="4">
    <original>R</original>
    <variation>K</variation>
    <location>
        <position position="227"/>
    </location>
</feature>
<feature type="mutagenesis site" description="No effect on MHC class I peptide tetramer binding." evidence="3">
    <original>R</original>
    <variation>G</variation>
    <location>
        <position position="234"/>
    </location>
</feature>
<feature type="mutagenesis site" description="No effect on MHC class I peptide tetramer binding; when associated with D-250." evidence="3">
    <original>D</original>
    <variation>N</variation>
    <location>
        <position position="248"/>
    </location>
</feature>
<feature type="mutagenesis site" description="No effect on MHC class I peptide tetramer binding; when associated with N-248." evidence="3">
    <original>N</original>
    <variation>D</variation>
    <location>
        <position position="250"/>
    </location>
</feature>
<feature type="mutagenesis site" description="No effect on MHC class I peptide tetramer binding." evidence="3">
    <original>I</original>
    <variation>Q</variation>
    <location>
        <position position="251"/>
    </location>
</feature>
<feature type="sequence conflict" description="In Ref. 7; AAH99880/AAH99879/AAH99878/AAH99867." evidence="7" ref="7">
    <original>P</original>
    <variation>L</variation>
    <location>
        <position position="4"/>
    </location>
</feature>
<feature type="sequence conflict" description="In Ref. 5; BAE35215." evidence="7" ref="5">
    <original>T</original>
    <variation>M</variation>
    <location>
        <position position="162"/>
    </location>
</feature>
<feature type="strand" evidence="8">
    <location>
        <begin position="145"/>
        <end position="151"/>
    </location>
</feature>
<feature type="strand" evidence="8">
    <location>
        <begin position="153"/>
        <end position="162"/>
    </location>
</feature>
<feature type="helix" evidence="8">
    <location>
        <begin position="164"/>
        <end position="173"/>
    </location>
</feature>
<feature type="helix" evidence="8">
    <location>
        <begin position="184"/>
        <end position="193"/>
    </location>
</feature>
<feature type="strand" evidence="8">
    <location>
        <begin position="199"/>
        <end position="206"/>
    </location>
</feature>
<feature type="turn" evidence="8">
    <location>
        <begin position="207"/>
        <end position="210"/>
    </location>
</feature>
<feature type="strand" evidence="8">
    <location>
        <begin position="211"/>
        <end position="214"/>
    </location>
</feature>
<feature type="helix" evidence="8">
    <location>
        <begin position="223"/>
        <end position="227"/>
    </location>
</feature>
<feature type="strand" evidence="8">
    <location>
        <begin position="233"/>
        <end position="239"/>
    </location>
</feature>
<feature type="strand" evidence="8">
    <location>
        <begin position="244"/>
        <end position="247"/>
    </location>
</feature>
<feature type="strand" evidence="8">
    <location>
        <begin position="253"/>
        <end position="260"/>
    </location>
</feature>
<feature type="strand" evidence="8">
    <location>
        <begin position="262"/>
        <end position="264"/>
    </location>
</feature>
<accession>Q64329</accession>
<accession>Q3TWQ1</accession>
<accession>Q3ZB40</accession>
<accession>Q499I4</accession>
<accession>Q61154</accession>
<accession>Q61198</accession>
<accession>Q64257</accession>
<reference key="1">
    <citation type="journal article" date="1991" name="J. Immunol.">
        <title>Ly-49 multigene family. New members of a superfamily of type II membrane proteins with lectin-like domains.</title>
        <authorList>
            <person name="Wong S."/>
            <person name="Freeman J.D."/>
            <person name="Kelleher C."/>
            <person name="Mager D."/>
            <person name="Takei F."/>
        </authorList>
    </citation>
    <scope>NUCLEOTIDE SEQUENCE [MRNA]</scope>
    <source>
        <strain>C57BL/6 X CBA</strain>
        <tissue>Lung</tissue>
    </source>
</reference>
<reference key="2">
    <citation type="journal article" date="1995" name="J. Exp. Med.">
        <title>Cloning and characterization of 5E6(Ly-49C), a receptor molecule expressed on a subset of murine natural killer cells.</title>
        <authorList>
            <person name="Stoneman E.R."/>
            <person name="Bennett M."/>
            <person name="An J."/>
            <person name="Chesnut K.A."/>
            <person name="Wakeland E.K."/>
            <person name="Scheerer J.B."/>
            <person name="Siciliano M.J."/>
            <person name="Kumar V."/>
            <person name="Mathew P.A."/>
        </authorList>
    </citation>
    <scope>NUCLEOTIDE SEQUENCE [MRNA]</scope>
    <source>
        <strain>BALB/cJ</strain>
        <strain>C57BL/6 X BALB/c</strain>
        <strain>C57BL/6J</strain>
        <strain>CB-17/SCID</strain>
        <strain>NZB</strain>
    </source>
</reference>
<reference key="3">
    <citation type="journal article" date="1996" name="J. Exp. Med.">
        <title>Heterogeneity among Ly-49C natural killer (NK) cells: characterization of highly related receptors with differing functions and expression patterns.</title>
        <authorList>
            <person name="Brennan J."/>
            <person name="Lemieux S."/>
            <person name="Freeman J.D."/>
            <person name="Mager D.L."/>
            <person name="Takei F."/>
        </authorList>
    </citation>
    <scope>NUCLEOTIDE SEQUENCE [MRNA]</scope>
    <scope>FUNCTION</scope>
    <source>
        <strain>C57BL/6J</strain>
        <tissue>Natural killer cell</tissue>
    </source>
</reference>
<reference key="4">
    <citation type="journal article" date="1996" name="J. Immunol.">
        <title>Cloning of minimally divergent allelic forms of the natural killer (NK) receptor Ly-49C, differentially controlled by host genes in the MHC and NK gene complexes.</title>
        <authorList>
            <person name="Sundbaeck J."/>
            <person name="Kaerre K."/>
            <person name="Sentman C.L."/>
        </authorList>
    </citation>
    <scope>NUCLEOTIDE SEQUENCE [MRNA]</scope>
    <source>
        <strain>A/Sn</strain>
        <strain>C57BL/6J</strain>
    </source>
</reference>
<reference key="5">
    <citation type="journal article" date="2005" name="Science">
        <title>The transcriptional landscape of the mammalian genome.</title>
        <authorList>
            <person name="Carninci P."/>
            <person name="Kasukawa T."/>
            <person name="Katayama S."/>
            <person name="Gough J."/>
            <person name="Frith M.C."/>
            <person name="Maeda N."/>
            <person name="Oyama R."/>
            <person name="Ravasi T."/>
            <person name="Lenhard B."/>
            <person name="Wells C."/>
            <person name="Kodzius R."/>
            <person name="Shimokawa K."/>
            <person name="Bajic V.B."/>
            <person name="Brenner S.E."/>
            <person name="Batalov S."/>
            <person name="Forrest A.R."/>
            <person name="Zavolan M."/>
            <person name="Davis M.J."/>
            <person name="Wilming L.G."/>
            <person name="Aidinis V."/>
            <person name="Allen J.E."/>
            <person name="Ambesi-Impiombato A."/>
            <person name="Apweiler R."/>
            <person name="Aturaliya R.N."/>
            <person name="Bailey T.L."/>
            <person name="Bansal M."/>
            <person name="Baxter L."/>
            <person name="Beisel K.W."/>
            <person name="Bersano T."/>
            <person name="Bono H."/>
            <person name="Chalk A.M."/>
            <person name="Chiu K.P."/>
            <person name="Choudhary V."/>
            <person name="Christoffels A."/>
            <person name="Clutterbuck D.R."/>
            <person name="Crowe M.L."/>
            <person name="Dalla E."/>
            <person name="Dalrymple B.P."/>
            <person name="de Bono B."/>
            <person name="Della Gatta G."/>
            <person name="di Bernardo D."/>
            <person name="Down T."/>
            <person name="Engstrom P."/>
            <person name="Fagiolini M."/>
            <person name="Faulkner G."/>
            <person name="Fletcher C.F."/>
            <person name="Fukushima T."/>
            <person name="Furuno M."/>
            <person name="Futaki S."/>
            <person name="Gariboldi M."/>
            <person name="Georgii-Hemming P."/>
            <person name="Gingeras T.R."/>
            <person name="Gojobori T."/>
            <person name="Green R.E."/>
            <person name="Gustincich S."/>
            <person name="Harbers M."/>
            <person name="Hayashi Y."/>
            <person name="Hensch T.K."/>
            <person name="Hirokawa N."/>
            <person name="Hill D."/>
            <person name="Huminiecki L."/>
            <person name="Iacono M."/>
            <person name="Ikeo K."/>
            <person name="Iwama A."/>
            <person name="Ishikawa T."/>
            <person name="Jakt M."/>
            <person name="Kanapin A."/>
            <person name="Katoh M."/>
            <person name="Kawasawa Y."/>
            <person name="Kelso J."/>
            <person name="Kitamura H."/>
            <person name="Kitano H."/>
            <person name="Kollias G."/>
            <person name="Krishnan S.P."/>
            <person name="Kruger A."/>
            <person name="Kummerfeld S.K."/>
            <person name="Kurochkin I.V."/>
            <person name="Lareau L.F."/>
            <person name="Lazarevic D."/>
            <person name="Lipovich L."/>
            <person name="Liu J."/>
            <person name="Liuni S."/>
            <person name="McWilliam S."/>
            <person name="Madan Babu M."/>
            <person name="Madera M."/>
            <person name="Marchionni L."/>
            <person name="Matsuda H."/>
            <person name="Matsuzawa S."/>
            <person name="Miki H."/>
            <person name="Mignone F."/>
            <person name="Miyake S."/>
            <person name="Morris K."/>
            <person name="Mottagui-Tabar S."/>
            <person name="Mulder N."/>
            <person name="Nakano N."/>
            <person name="Nakauchi H."/>
            <person name="Ng P."/>
            <person name="Nilsson R."/>
            <person name="Nishiguchi S."/>
            <person name="Nishikawa S."/>
            <person name="Nori F."/>
            <person name="Ohara O."/>
            <person name="Okazaki Y."/>
            <person name="Orlando V."/>
            <person name="Pang K.C."/>
            <person name="Pavan W.J."/>
            <person name="Pavesi G."/>
            <person name="Pesole G."/>
            <person name="Petrovsky N."/>
            <person name="Piazza S."/>
            <person name="Reed J."/>
            <person name="Reid J.F."/>
            <person name="Ring B.Z."/>
            <person name="Ringwald M."/>
            <person name="Rost B."/>
            <person name="Ruan Y."/>
            <person name="Salzberg S.L."/>
            <person name="Sandelin A."/>
            <person name="Schneider C."/>
            <person name="Schoenbach C."/>
            <person name="Sekiguchi K."/>
            <person name="Semple C.A."/>
            <person name="Seno S."/>
            <person name="Sessa L."/>
            <person name="Sheng Y."/>
            <person name="Shibata Y."/>
            <person name="Shimada H."/>
            <person name="Shimada K."/>
            <person name="Silva D."/>
            <person name="Sinclair B."/>
            <person name="Sperling S."/>
            <person name="Stupka E."/>
            <person name="Sugiura K."/>
            <person name="Sultana R."/>
            <person name="Takenaka Y."/>
            <person name="Taki K."/>
            <person name="Tammoja K."/>
            <person name="Tan S.L."/>
            <person name="Tang S."/>
            <person name="Taylor M.S."/>
            <person name="Tegner J."/>
            <person name="Teichmann S.A."/>
            <person name="Ueda H.R."/>
            <person name="van Nimwegen E."/>
            <person name="Verardo R."/>
            <person name="Wei C.L."/>
            <person name="Yagi K."/>
            <person name="Yamanishi H."/>
            <person name="Zabarovsky E."/>
            <person name="Zhu S."/>
            <person name="Zimmer A."/>
            <person name="Hide W."/>
            <person name="Bult C."/>
            <person name="Grimmond S.M."/>
            <person name="Teasdale R.D."/>
            <person name="Liu E.T."/>
            <person name="Brusic V."/>
            <person name="Quackenbush J."/>
            <person name="Wahlestedt C."/>
            <person name="Mattick J.S."/>
            <person name="Hume D.A."/>
            <person name="Kai C."/>
            <person name="Sasaki D."/>
            <person name="Tomaru Y."/>
            <person name="Fukuda S."/>
            <person name="Kanamori-Katayama M."/>
            <person name="Suzuki M."/>
            <person name="Aoki J."/>
            <person name="Arakawa T."/>
            <person name="Iida J."/>
            <person name="Imamura K."/>
            <person name="Itoh M."/>
            <person name="Kato T."/>
            <person name="Kawaji H."/>
            <person name="Kawagashira N."/>
            <person name="Kawashima T."/>
            <person name="Kojima M."/>
            <person name="Kondo S."/>
            <person name="Konno H."/>
            <person name="Nakano K."/>
            <person name="Ninomiya N."/>
            <person name="Nishio T."/>
            <person name="Okada M."/>
            <person name="Plessy C."/>
            <person name="Shibata K."/>
            <person name="Shiraki T."/>
            <person name="Suzuki S."/>
            <person name="Tagami M."/>
            <person name="Waki K."/>
            <person name="Watahiki A."/>
            <person name="Okamura-Oho Y."/>
            <person name="Suzuki H."/>
            <person name="Kawai J."/>
            <person name="Hayashizaki Y."/>
        </authorList>
    </citation>
    <scope>NUCLEOTIDE SEQUENCE [LARGE SCALE MRNA]</scope>
    <source>
        <strain>C57BL/6J</strain>
    </source>
</reference>
<reference key="6">
    <citation type="journal article" date="2009" name="PLoS Biol.">
        <title>Lineage-specific biology revealed by a finished genome assembly of the mouse.</title>
        <authorList>
            <person name="Church D.M."/>
            <person name="Goodstadt L."/>
            <person name="Hillier L.W."/>
            <person name="Zody M.C."/>
            <person name="Goldstein S."/>
            <person name="She X."/>
            <person name="Bult C.J."/>
            <person name="Agarwala R."/>
            <person name="Cherry J.L."/>
            <person name="DiCuccio M."/>
            <person name="Hlavina W."/>
            <person name="Kapustin Y."/>
            <person name="Meric P."/>
            <person name="Maglott D."/>
            <person name="Birtle Z."/>
            <person name="Marques A.C."/>
            <person name="Graves T."/>
            <person name="Zhou S."/>
            <person name="Teague B."/>
            <person name="Potamousis K."/>
            <person name="Churas C."/>
            <person name="Place M."/>
            <person name="Herschleb J."/>
            <person name="Runnheim R."/>
            <person name="Forrest D."/>
            <person name="Amos-Landgraf J."/>
            <person name="Schwartz D.C."/>
            <person name="Cheng Z."/>
            <person name="Lindblad-Toh K."/>
            <person name="Eichler E.E."/>
            <person name="Ponting C.P."/>
        </authorList>
    </citation>
    <scope>NUCLEOTIDE SEQUENCE [LARGE SCALE GENOMIC DNA]</scope>
    <source>
        <strain>C57BL/6J</strain>
    </source>
</reference>
<reference key="7">
    <citation type="journal article" date="2004" name="Genome Res.">
        <title>The status, quality, and expansion of the NIH full-length cDNA project: the Mammalian Gene Collection (MGC).</title>
        <authorList>
            <consortium name="The MGC Project Team"/>
        </authorList>
    </citation>
    <scope>NUCLEOTIDE SEQUENCE [LARGE SCALE MRNA]</scope>
</reference>
<reference key="8">
    <citation type="journal article" date="2002" name="J. Immunol.">
        <title>NK cell inhibitory receptor Ly-49C residues involved in MHC class I binding.</title>
        <authorList>
            <person name="Sundback J."/>
            <person name="Achour A."/>
            <person name="Michaelsson J."/>
            <person name="Lindstrom H."/>
            <person name="Karre K."/>
        </authorList>
    </citation>
    <scope>MUTAGENESIS OF ASN-160; LYS-161; THR-162; ALA-169; ASN-170; HIS-173; TYR-174; ILE-195; PRO-196; LYS-225; ILE-226; ARG-234; ASP-248; ASN-250 AND ILE-251</scope>
</reference>
<reference key="9">
    <citation type="journal article" date="2003" name="Nat. Immunol.">
        <title>Variable MHC class I engagement by Ly49 natural killer cell receptors demonstrated by the crystal structure of Ly49C bound to H-2K(b).</title>
        <authorList>
            <person name="Dam J."/>
            <person name="Guan R."/>
            <person name="Natarajan K."/>
            <person name="Dimasi N."/>
            <person name="Chlewicki L.K."/>
            <person name="Kranz D.M."/>
            <person name="Schuck P."/>
            <person name="Margulies D.H."/>
            <person name="Mariuzza R.A."/>
        </authorList>
    </citation>
    <scope>X-RAY CRYSTALLOGRAPHY (2.9 ANGSTROMS) OF 142-263 OF WILD-TYPE AND MUTANT ARG-121/SER-175/GLU-197/ARG-227 IN COMPLEX WITH H-2K</scope>
    <scope>SUBUNIT</scope>
    <scope>DISULFIDE BONDS</scope>
    <scope>MUTAGENESIS OF ARG-121; SER-175; GLU-197 AND ARG-227</scope>
</reference>
<reference key="10">
    <citation type="journal article" date="2008" name="J. Biol. Chem.">
        <title>Molecular architecture of the major histocompatibility complex class I-binding site of Ly49 natural killer cell receptors.</title>
        <authorList>
            <person name="Deng L."/>
            <person name="Cho S."/>
            <person name="Malchiodi E.L."/>
            <person name="Kerzic M.C."/>
            <person name="Dam J."/>
            <person name="Mariuzza R.A."/>
        </authorList>
    </citation>
    <scope>X-RAY CRYSTALLOGRAPHY (2.6 ANGSTROMS) OF 67-266 ALONE AND IN COMPLEX WITH H-2K</scope>
    <scope>SUBUNIT</scope>
    <scope>DISULFIDE BONDS</scope>
</reference>
<sequence>MSEPEVTYSTVRLHKSSGLQKLVRHEETQGPREVGNRKCSAPWQLIVKALGILCFLLLVTVAVLAVKIFQYNQHKQEINETLNHHHNCSNMQRAFNLKEEMLTNKSIDCRPSNETLEYIKREQDRWDSKTKTVLDSSRDTGRGVKYWFCYSTKCYYFIMNKTTWSGCKANCQHYSVPILKIEDEDELKFLQRHVIPENYWIGLSYDKKKKEWAWIDNGPSKLDMKIRKMNFKSRGCVFLSKARIEDIDCNIPYYCICGKKLDKFPD</sequence>
<keyword id="KW-0002">3D-structure</keyword>
<keyword id="KW-0130">Cell adhesion</keyword>
<keyword id="KW-1015">Disulfide bond</keyword>
<keyword id="KW-0325">Glycoprotein</keyword>
<keyword id="KW-0430">Lectin</keyword>
<keyword id="KW-0472">Membrane</keyword>
<keyword id="KW-0675">Receptor</keyword>
<keyword id="KW-1185">Reference proteome</keyword>
<keyword id="KW-0735">Signal-anchor</keyword>
<keyword id="KW-0812">Transmembrane</keyword>
<keyword id="KW-1133">Transmembrane helix</keyword>
<evidence type="ECO:0000255" key="1"/>
<evidence type="ECO:0000255" key="2">
    <source>
        <dbReference type="PROSITE-ProRule" id="PRU00040"/>
    </source>
</evidence>
<evidence type="ECO:0000269" key="3">
    <source>
    </source>
</evidence>
<evidence type="ECO:0000269" key="4">
    <source>
    </source>
</evidence>
<evidence type="ECO:0000269" key="5">
    <source>
    </source>
</evidence>
<evidence type="ECO:0000269" key="6">
    <source>
    </source>
</evidence>
<evidence type="ECO:0000305" key="7"/>
<evidence type="ECO:0007829" key="8">
    <source>
        <dbReference type="PDB" id="3C8J"/>
    </source>
</evidence>
<comment type="function">
    <text evidence="6">Receptor on natural killer (NK) cells for class I MHC.</text>
</comment>
<comment type="subunit">
    <text evidence="4 5">Homodimer; disulfide-linked.</text>
</comment>
<comment type="subcellular location">
    <subcellularLocation>
        <location>Membrane</location>
        <topology>Single-pass type II membrane protein</topology>
    </subcellularLocation>
</comment>
<organism>
    <name type="scientific">Mus musculus</name>
    <name type="common">Mouse</name>
    <dbReference type="NCBI Taxonomy" id="10090"/>
    <lineage>
        <taxon>Eukaryota</taxon>
        <taxon>Metazoa</taxon>
        <taxon>Chordata</taxon>
        <taxon>Craniata</taxon>
        <taxon>Vertebrata</taxon>
        <taxon>Euteleostomi</taxon>
        <taxon>Mammalia</taxon>
        <taxon>Eutheria</taxon>
        <taxon>Euarchontoglires</taxon>
        <taxon>Glires</taxon>
        <taxon>Rodentia</taxon>
        <taxon>Myomorpha</taxon>
        <taxon>Muroidea</taxon>
        <taxon>Muridae</taxon>
        <taxon>Murinae</taxon>
        <taxon>Mus</taxon>
        <taxon>Mus</taxon>
    </lineage>
</organism>
<proteinExistence type="evidence at protein level"/>
<gene>
    <name type="primary">Klra3</name>
    <name type="synonym">Ly-49c</name>
    <name type="synonym">Ly49C</name>
</gene>